<name>CCL9_HUMLU</name>
<proteinExistence type="evidence at transcript level"/>
<organism>
    <name type="scientific">Humulus lupulus</name>
    <name type="common">European hop</name>
    <dbReference type="NCBI Taxonomy" id="3486"/>
    <lineage>
        <taxon>Eukaryota</taxon>
        <taxon>Viridiplantae</taxon>
        <taxon>Streptophyta</taxon>
        <taxon>Embryophyta</taxon>
        <taxon>Tracheophyta</taxon>
        <taxon>Spermatophyta</taxon>
        <taxon>Magnoliopsida</taxon>
        <taxon>eudicotyledons</taxon>
        <taxon>Gunneridae</taxon>
        <taxon>Pentapetalae</taxon>
        <taxon>rosids</taxon>
        <taxon>fabids</taxon>
        <taxon>Rosales</taxon>
        <taxon>Cannabaceae</taxon>
        <taxon>Humulus</taxon>
    </lineage>
</organism>
<dbReference type="EC" id="6.2.1.-" evidence="6"/>
<dbReference type="EMBL" id="JQ740211">
    <property type="protein sequence ID" value="AGA17926.1"/>
    <property type="molecule type" value="mRNA"/>
</dbReference>
<dbReference type="SMR" id="M4IQQ7"/>
<dbReference type="GO" id="GO:0005829">
    <property type="term" value="C:cytosol"/>
    <property type="evidence" value="ECO:0000250"/>
    <property type="project" value="UniProtKB"/>
</dbReference>
<dbReference type="GO" id="GO:0005524">
    <property type="term" value="F:ATP binding"/>
    <property type="evidence" value="ECO:0007669"/>
    <property type="project" value="UniProtKB-KW"/>
</dbReference>
<dbReference type="GO" id="GO:0016405">
    <property type="term" value="F:CoA-ligase activity"/>
    <property type="evidence" value="ECO:0000250"/>
    <property type="project" value="UniProtKB"/>
</dbReference>
<dbReference type="GO" id="GO:0031956">
    <property type="term" value="F:medium-chain fatty acid-CoA ligase activity"/>
    <property type="evidence" value="ECO:0007669"/>
    <property type="project" value="TreeGrafter"/>
</dbReference>
<dbReference type="GO" id="GO:0006631">
    <property type="term" value="P:fatty acid metabolic process"/>
    <property type="evidence" value="ECO:0007669"/>
    <property type="project" value="TreeGrafter"/>
</dbReference>
<dbReference type="CDD" id="cd05926">
    <property type="entry name" value="FACL_fum10p_like"/>
    <property type="match status" value="1"/>
</dbReference>
<dbReference type="FunFam" id="3.30.300.30:FF:000007">
    <property type="entry name" value="4-coumarate--CoA ligase 2"/>
    <property type="match status" value="1"/>
</dbReference>
<dbReference type="Gene3D" id="3.30.300.30">
    <property type="match status" value="1"/>
</dbReference>
<dbReference type="Gene3D" id="3.40.50.12780">
    <property type="entry name" value="N-terminal domain of ligase-like"/>
    <property type="match status" value="1"/>
</dbReference>
<dbReference type="InterPro" id="IPR025110">
    <property type="entry name" value="AMP-bd_C"/>
</dbReference>
<dbReference type="InterPro" id="IPR045851">
    <property type="entry name" value="AMP-bd_C_sf"/>
</dbReference>
<dbReference type="InterPro" id="IPR020845">
    <property type="entry name" value="AMP-binding_CS"/>
</dbReference>
<dbReference type="InterPro" id="IPR000873">
    <property type="entry name" value="AMP-dep_synth/lig_dom"/>
</dbReference>
<dbReference type="InterPro" id="IPR042099">
    <property type="entry name" value="ANL_N_sf"/>
</dbReference>
<dbReference type="InterPro" id="IPR045310">
    <property type="entry name" value="Pcs60-like"/>
</dbReference>
<dbReference type="PANTHER" id="PTHR43201">
    <property type="entry name" value="ACYL-COA SYNTHETASE"/>
    <property type="match status" value="1"/>
</dbReference>
<dbReference type="PANTHER" id="PTHR43201:SF27">
    <property type="entry name" value="AMP DEPENDENT COA LIGASE"/>
    <property type="match status" value="1"/>
</dbReference>
<dbReference type="Pfam" id="PF00501">
    <property type="entry name" value="AMP-binding"/>
    <property type="match status" value="1"/>
</dbReference>
<dbReference type="Pfam" id="PF13193">
    <property type="entry name" value="AMP-binding_C"/>
    <property type="match status" value="1"/>
</dbReference>
<dbReference type="SUPFAM" id="SSF56801">
    <property type="entry name" value="Acetyl-CoA synthetase-like"/>
    <property type="match status" value="1"/>
</dbReference>
<dbReference type="PROSITE" id="PS00455">
    <property type="entry name" value="AMP_BINDING"/>
    <property type="match status" value="1"/>
</dbReference>
<comment type="subcellular location">
    <subcellularLocation>
        <location evidence="1">Cytoplasm</location>
        <location evidence="1">Cytosol</location>
    </subcellularLocation>
</comment>
<comment type="domain">
    <text evidence="2">Both substrate-binding domains (SBD1 and SBD2) are involved in the substrate recognition, and are sufficient to confer the substrate specificity.</text>
</comment>
<comment type="similarity">
    <text evidence="5">Belongs to the ATP-dependent AMP-binding enzyme family.</text>
</comment>
<evidence type="ECO:0000250" key="1">
    <source>
        <dbReference type="UniProtKB" id="M4IRL4"/>
    </source>
</evidence>
<evidence type="ECO:0000250" key="2">
    <source>
        <dbReference type="UniProtKB" id="Q42524"/>
    </source>
</evidence>
<evidence type="ECO:0000250" key="3">
    <source>
        <dbReference type="UniProtKB" id="Q81G39"/>
    </source>
</evidence>
<evidence type="ECO:0000303" key="4">
    <source>
    </source>
</evidence>
<evidence type="ECO:0000305" key="5"/>
<evidence type="ECO:0000305" key="6">
    <source>
    </source>
</evidence>
<accession>M4IQQ7</accession>
<keyword id="KW-0067">ATP-binding</keyword>
<keyword id="KW-0963">Cytoplasm</keyword>
<keyword id="KW-0436">Ligase</keyword>
<keyword id="KW-0547">Nucleotide-binding</keyword>
<sequence length="525" mass="56105">MANNITLTGLLKKAAAEFSDRRAILVSGEFHLTHARLQEIVDHAASLLLASGVGHGDVVALTFPNTIEYIVMFLAVIRCRAVAAPLNSAYTAEEFEFYLSDSESKLLITPPKGIEAARAAASKLNITHVTATLPGGDGLIALSPSPNNESSLDAVAELTNDPSDVSLFLHTSGTTSRPKGVPLTQLNLASSVQNIKSVYKLSESDSTVVVLPLFHVHGMIAGLLSSLIAGSAVTLPAAGRFSASTFWSDMIACNATWYTAVPTIHQIILDRHLNKPEPTYPKLRFIRSCSASLAPTIMGRLEESFGAPVLEAYAMTEAAHLMASNPLPEDGGHKPGSVGKPVGQEMAILDLNGSAQLPGFSGEVCIRGPNVTKGYKNNPEANKAAFQFGWFHTGDVGYFDEDGYLHLVGRIKELINRGGEKISPIEVDAVLLSHPDLAQAVAFGVPDDKYGEEINCAVIPREGSEVDEDGVLRFCKKNLAAFKVPKKVFITDSLPKTATGKIQRRIVAEHFLAQISTAKVPKFGA</sequence>
<reference key="1">
    <citation type="journal article" date="2013" name="Mol. Plant">
        <title>Characterization of the formation of branched short-chain fatty acid:CoAs for bitter acid biosynthesis in hop glandular trichomes.</title>
        <authorList>
            <person name="Xu H."/>
            <person name="Zhang F."/>
            <person name="Liu B."/>
            <person name="Huhman D.V."/>
            <person name="Sumner L.W."/>
            <person name="Dixon R.A."/>
            <person name="Wang G."/>
        </authorList>
    </citation>
    <scope>NUCLEOTIDE SEQUENCE [MRNA]</scope>
    <scope>GENE FAMILY</scope>
    <scope>NOMENCLATURE</scope>
    <source>
        <strain>cv. Nugget</strain>
    </source>
</reference>
<feature type="chain" id="PRO_0000452954" description="Probable CoA ligase CCL9">
    <location>
        <begin position="1"/>
        <end position="525"/>
    </location>
</feature>
<feature type="region of interest" description="SBD1" evidence="2">
    <location>
        <begin position="242"/>
        <end position="311"/>
    </location>
</feature>
<feature type="region of interest" description="SBD2" evidence="2">
    <location>
        <begin position="312"/>
        <end position="375"/>
    </location>
</feature>
<feature type="binding site" evidence="3">
    <location>
        <begin position="171"/>
        <end position="179"/>
    </location>
    <ligand>
        <name>ATP</name>
        <dbReference type="ChEBI" id="CHEBI:30616"/>
    </ligand>
</feature>
<feature type="binding site" evidence="3">
    <location>
        <begin position="311"/>
        <end position="316"/>
    </location>
    <ligand>
        <name>ATP</name>
        <dbReference type="ChEBI" id="CHEBI:30616"/>
    </ligand>
</feature>
<feature type="binding site" evidence="3">
    <location>
        <position position="395"/>
    </location>
    <ligand>
        <name>ATP</name>
        <dbReference type="ChEBI" id="CHEBI:30616"/>
    </ligand>
</feature>
<feature type="binding site" evidence="3">
    <location>
        <begin position="407"/>
        <end position="410"/>
    </location>
    <ligand>
        <name>ATP</name>
        <dbReference type="ChEBI" id="CHEBI:30616"/>
    </ligand>
</feature>
<feature type="binding site" evidence="3">
    <location>
        <position position="501"/>
    </location>
    <ligand>
        <name>ATP</name>
        <dbReference type="ChEBI" id="CHEBI:30616"/>
    </ligand>
</feature>
<gene>
    <name evidence="4" type="primary">CCL9</name>
</gene>
<protein>
    <recommendedName>
        <fullName evidence="6">Probable CoA ligase CCL9</fullName>
        <shortName evidence="4">HlCCL9</shortName>
        <ecNumber evidence="6">6.2.1.-</ecNumber>
    </recommendedName>
</protein>